<evidence type="ECO:0000255" key="1">
    <source>
        <dbReference type="HAMAP-Rule" id="MF_00508"/>
    </source>
</evidence>
<evidence type="ECO:0000305" key="2"/>
<reference key="1">
    <citation type="journal article" date="2009" name="PLoS ONE">
        <title>Genome degradation in Brucella ovis corresponds with narrowing of its host range and tissue tropism.</title>
        <authorList>
            <person name="Tsolis R.M."/>
            <person name="Seshadri R."/>
            <person name="Santos R.L."/>
            <person name="Sangari F.J."/>
            <person name="Lobo J.M."/>
            <person name="de Jong M.F."/>
            <person name="Ren Q."/>
            <person name="Myers G."/>
            <person name="Brinkac L.M."/>
            <person name="Nelson W.C."/>
            <person name="Deboy R.T."/>
            <person name="Angiuoli S."/>
            <person name="Khouri H."/>
            <person name="Dimitrov G."/>
            <person name="Robinson J.R."/>
            <person name="Mulligan S."/>
            <person name="Walker R.L."/>
            <person name="Elzer P.E."/>
            <person name="Hassan K.A."/>
            <person name="Paulsen I.T."/>
        </authorList>
    </citation>
    <scope>NUCLEOTIDE SEQUENCE [LARGE SCALE GENOMIC DNA]</scope>
    <source>
        <strain>ATCC 25840 / 63/290 / NCTC 10512</strain>
    </source>
</reference>
<keyword id="KW-0687">Ribonucleoprotein</keyword>
<keyword id="KW-0689">Ribosomal protein</keyword>
<sequence>MNGQNIRIRLKAFDHRILDASTREIVSTAKRTGANVRGPIPLPTRIEKFTVNRSPHIDKKSREQFEMRTHKRLLDIVDPTPQTVDALMKLDLSAGVDVEIKL</sequence>
<accession>A5VR07</accession>
<protein>
    <recommendedName>
        <fullName evidence="1">Small ribosomal subunit protein uS10</fullName>
    </recommendedName>
    <alternativeName>
        <fullName evidence="2">30S ribosomal protein S10</fullName>
    </alternativeName>
</protein>
<name>RS10_BRUO2</name>
<proteinExistence type="inferred from homology"/>
<organism>
    <name type="scientific">Brucella ovis (strain ATCC 25840 / 63/290 / NCTC 10512)</name>
    <dbReference type="NCBI Taxonomy" id="444178"/>
    <lineage>
        <taxon>Bacteria</taxon>
        <taxon>Pseudomonadati</taxon>
        <taxon>Pseudomonadota</taxon>
        <taxon>Alphaproteobacteria</taxon>
        <taxon>Hyphomicrobiales</taxon>
        <taxon>Brucellaceae</taxon>
        <taxon>Brucella/Ochrobactrum group</taxon>
        <taxon>Brucella</taxon>
    </lineage>
</organism>
<comment type="function">
    <text evidence="1">Involved in the binding of tRNA to the ribosomes.</text>
</comment>
<comment type="subunit">
    <text evidence="1">Part of the 30S ribosomal subunit.</text>
</comment>
<comment type="similarity">
    <text evidence="1">Belongs to the universal ribosomal protein uS10 family.</text>
</comment>
<gene>
    <name evidence="1" type="primary">rpsJ</name>
    <name type="ordered locus">BOV_1197</name>
</gene>
<feature type="chain" id="PRO_1000014993" description="Small ribosomal subunit protein uS10">
    <location>
        <begin position="1"/>
        <end position="102"/>
    </location>
</feature>
<dbReference type="EMBL" id="CP000708">
    <property type="protein sequence ID" value="ABQ61110.1"/>
    <property type="molecule type" value="Genomic_DNA"/>
</dbReference>
<dbReference type="RefSeq" id="WP_002964363.1">
    <property type="nucleotide sequence ID" value="NC_009505.1"/>
</dbReference>
<dbReference type="SMR" id="A5VR07"/>
<dbReference type="GeneID" id="97533523"/>
<dbReference type="KEGG" id="bov:BOV_1197"/>
<dbReference type="HOGENOM" id="CLU_122625_1_3_5"/>
<dbReference type="PhylomeDB" id="A5VR07"/>
<dbReference type="Proteomes" id="UP000006383">
    <property type="component" value="Chromosome I"/>
</dbReference>
<dbReference type="GO" id="GO:1990904">
    <property type="term" value="C:ribonucleoprotein complex"/>
    <property type="evidence" value="ECO:0007669"/>
    <property type="project" value="UniProtKB-KW"/>
</dbReference>
<dbReference type="GO" id="GO:0005840">
    <property type="term" value="C:ribosome"/>
    <property type="evidence" value="ECO:0007669"/>
    <property type="project" value="UniProtKB-KW"/>
</dbReference>
<dbReference type="GO" id="GO:0003735">
    <property type="term" value="F:structural constituent of ribosome"/>
    <property type="evidence" value="ECO:0007669"/>
    <property type="project" value="InterPro"/>
</dbReference>
<dbReference type="GO" id="GO:0000049">
    <property type="term" value="F:tRNA binding"/>
    <property type="evidence" value="ECO:0007669"/>
    <property type="project" value="UniProtKB-UniRule"/>
</dbReference>
<dbReference type="GO" id="GO:0006412">
    <property type="term" value="P:translation"/>
    <property type="evidence" value="ECO:0007669"/>
    <property type="project" value="UniProtKB-UniRule"/>
</dbReference>
<dbReference type="FunFam" id="3.30.70.600:FF:000001">
    <property type="entry name" value="30S ribosomal protein S10"/>
    <property type="match status" value="1"/>
</dbReference>
<dbReference type="Gene3D" id="3.30.70.600">
    <property type="entry name" value="Ribosomal protein S10 domain"/>
    <property type="match status" value="1"/>
</dbReference>
<dbReference type="HAMAP" id="MF_00508">
    <property type="entry name" value="Ribosomal_uS10"/>
    <property type="match status" value="1"/>
</dbReference>
<dbReference type="InterPro" id="IPR001848">
    <property type="entry name" value="Ribosomal_uS10"/>
</dbReference>
<dbReference type="InterPro" id="IPR018268">
    <property type="entry name" value="Ribosomal_uS10_CS"/>
</dbReference>
<dbReference type="InterPro" id="IPR027486">
    <property type="entry name" value="Ribosomal_uS10_dom"/>
</dbReference>
<dbReference type="InterPro" id="IPR036838">
    <property type="entry name" value="Ribosomal_uS10_dom_sf"/>
</dbReference>
<dbReference type="NCBIfam" id="NF001861">
    <property type="entry name" value="PRK00596.1"/>
    <property type="match status" value="1"/>
</dbReference>
<dbReference type="NCBIfam" id="TIGR01049">
    <property type="entry name" value="rpsJ_bact"/>
    <property type="match status" value="1"/>
</dbReference>
<dbReference type="PANTHER" id="PTHR11700">
    <property type="entry name" value="30S RIBOSOMAL PROTEIN S10 FAMILY MEMBER"/>
    <property type="match status" value="1"/>
</dbReference>
<dbReference type="Pfam" id="PF00338">
    <property type="entry name" value="Ribosomal_S10"/>
    <property type="match status" value="1"/>
</dbReference>
<dbReference type="PRINTS" id="PR00971">
    <property type="entry name" value="RIBOSOMALS10"/>
</dbReference>
<dbReference type="SMART" id="SM01403">
    <property type="entry name" value="Ribosomal_S10"/>
    <property type="match status" value="1"/>
</dbReference>
<dbReference type="SUPFAM" id="SSF54999">
    <property type="entry name" value="Ribosomal protein S10"/>
    <property type="match status" value="1"/>
</dbReference>
<dbReference type="PROSITE" id="PS00361">
    <property type="entry name" value="RIBOSOMAL_S10"/>
    <property type="match status" value="1"/>
</dbReference>